<feature type="chain" id="PRO_0000254627" description="Leukocyte receptor cluster member 1">
    <location>
        <begin position="1"/>
        <end position="264"/>
    </location>
</feature>
<feature type="region of interest" description="Disordered" evidence="2">
    <location>
        <begin position="1"/>
        <end position="37"/>
    </location>
</feature>
<feature type="region of interest" description="Disordered" evidence="2">
    <location>
        <begin position="49"/>
        <end position="76"/>
    </location>
</feature>
<feature type="region of interest" description="Disordered" evidence="2">
    <location>
        <begin position="118"/>
        <end position="264"/>
    </location>
</feature>
<feature type="coiled-coil region" evidence="1">
    <location>
        <begin position="16"/>
        <end position="46"/>
    </location>
</feature>
<feature type="coiled-coil region" evidence="1">
    <location>
        <begin position="89"/>
        <end position="115"/>
    </location>
</feature>
<feature type="coiled-coil region" evidence="1">
    <location>
        <begin position="196"/>
        <end position="222"/>
    </location>
</feature>
<feature type="compositionally biased region" description="Basic and acidic residues" evidence="2">
    <location>
        <begin position="12"/>
        <end position="37"/>
    </location>
</feature>
<feature type="compositionally biased region" description="Low complexity" evidence="2">
    <location>
        <begin position="59"/>
        <end position="75"/>
    </location>
</feature>
<feature type="compositionally biased region" description="Basic and acidic residues" evidence="2">
    <location>
        <begin position="146"/>
        <end position="162"/>
    </location>
</feature>
<feature type="compositionally biased region" description="Basic and acidic residues" evidence="2">
    <location>
        <begin position="170"/>
        <end position="214"/>
    </location>
</feature>
<feature type="modified residue" description="Phosphoserine" evidence="5 6 7 8">
    <location>
        <position position="59"/>
    </location>
</feature>
<feature type="modified residue" description="Phosphoserine" evidence="4">
    <location>
        <position position="245"/>
    </location>
</feature>
<feature type="sequence variant" id="VAR_051090" description="In dbSNP:rs35089861.">
    <original>K</original>
    <variation>E</variation>
    <location>
        <position position="97"/>
    </location>
</feature>
<comment type="interaction">
    <interactant intactId="EBI-726510">
        <id>Q96BZ8</id>
    </interactant>
    <interactant intactId="EBI-11096309">
        <id>Q9NYB9-2</id>
        <label>ABI2</label>
    </interactant>
    <organismsDiffer>false</organismsDiffer>
    <experiments>3</experiments>
</comment>
<comment type="interaction">
    <interactant intactId="EBI-726510">
        <id>Q96BZ8</id>
    </interactant>
    <interactant intactId="EBI-18394052">
        <id>Q8WXK4-2</id>
        <label>ASB12</label>
    </interactant>
    <organismsDiffer>false</organismsDiffer>
    <experiments>3</experiments>
</comment>
<comment type="interaction">
    <interactant intactId="EBI-726510">
        <id>Q96BZ8</id>
    </interactant>
    <interactant intactId="EBI-744695">
        <id>Q8N9N5</id>
        <label>BANP</label>
    </interactant>
    <organismsDiffer>false</organismsDiffer>
    <experiments>4</experiments>
</comment>
<comment type="interaction">
    <interactant intactId="EBI-726510">
        <id>Q96BZ8</id>
    </interactant>
    <interactant intactId="EBI-742722">
        <id>Q9BUH8</id>
        <label>BEGAIN</label>
    </interactant>
    <organismsDiffer>false</organismsDiffer>
    <experiments>3</experiments>
</comment>
<comment type="interaction">
    <interactant intactId="EBI-726510">
        <id>Q96BZ8</id>
    </interactant>
    <interactant intactId="EBI-725606">
        <id>Q9NWQ9</id>
        <label>C14orf119</label>
    </interactant>
    <organismsDiffer>false</organismsDiffer>
    <experiments>3</experiments>
</comment>
<comment type="interaction">
    <interactant intactId="EBI-726510">
        <id>Q96BZ8</id>
    </interactant>
    <interactant intactId="EBI-739580">
        <id>Q13137</id>
        <label>CALCOCO2</label>
    </interactant>
    <organismsDiffer>false</organismsDiffer>
    <experiments>3</experiments>
</comment>
<comment type="interaction">
    <interactant intactId="EBI-726510">
        <id>Q96BZ8</id>
    </interactant>
    <interactant intactId="EBI-3866279">
        <id>Q9BWT7</id>
        <label>CARD10</label>
    </interactant>
    <organismsDiffer>false</organismsDiffer>
    <experiments>3</experiments>
</comment>
<comment type="interaction">
    <interactant intactId="EBI-726510">
        <id>Q96BZ8</id>
    </interactant>
    <interactant intactId="EBI-751319">
        <id>Q9H257</id>
        <label>CARD9</label>
    </interactant>
    <organismsDiffer>false</organismsDiffer>
    <experiments>3</experiments>
</comment>
<comment type="interaction">
    <interactant intactId="EBI-726510">
        <id>Q96BZ8</id>
    </interactant>
    <interactant intactId="EBI-11530605">
        <id>Q9H257-2</id>
        <label>CARD9</label>
    </interactant>
    <organismsDiffer>false</organismsDiffer>
    <experiments>3</experiments>
</comment>
<comment type="interaction">
    <interactant intactId="EBI-726510">
        <id>Q96BZ8</id>
    </interactant>
    <interactant intactId="EBI-741724">
        <id>Q8NA61</id>
        <label>CBY2</label>
    </interactant>
    <organismsDiffer>false</organismsDiffer>
    <experiments>3</experiments>
</comment>
<comment type="interaction">
    <interactant intactId="EBI-726510">
        <id>Q96BZ8</id>
    </interactant>
    <interactant intactId="EBI-10171570">
        <id>Q68D86</id>
        <label>CCDC102B</label>
    </interactant>
    <organismsDiffer>false</organismsDiffer>
    <experiments>3</experiments>
</comment>
<comment type="interaction">
    <interactant intactId="EBI-726510">
        <id>Q96BZ8</id>
    </interactant>
    <interactant intactId="EBI-10171416">
        <id>Q96JN2-2</id>
        <label>CCDC136</label>
    </interactant>
    <organismsDiffer>false</organismsDiffer>
    <experiments>3</experiments>
</comment>
<comment type="interaction">
    <interactant intactId="EBI-726510">
        <id>Q96BZ8</id>
    </interactant>
    <interactant intactId="EBI-2808286">
        <id>Q2TAC2</id>
        <label>CCDC57</label>
    </interactant>
    <organismsDiffer>false</organismsDiffer>
    <experiments>3</experiments>
</comment>
<comment type="interaction">
    <interactant intactId="EBI-726510">
        <id>Q96BZ8</id>
    </interactant>
    <interactant intactId="EBI-10961624">
        <id>Q2TAC2-2</id>
        <label>CCDC57</label>
    </interactant>
    <organismsDiffer>false</organismsDiffer>
    <experiments>3</experiments>
</comment>
<comment type="interaction">
    <interactant intactId="EBI-726510">
        <id>Q96BZ8</id>
    </interactant>
    <interactant intactId="EBI-10175300">
        <id>Q8TD31-3</id>
        <label>CCHCR1</label>
    </interactant>
    <organismsDiffer>false</organismsDiffer>
    <experiments>3</experiments>
</comment>
<comment type="interaction">
    <interactant intactId="EBI-726510">
        <id>Q96BZ8</id>
    </interactant>
    <interactant intactId="EBI-1181367">
        <id>Q01850</id>
        <label>CDR2</label>
    </interactant>
    <organismsDiffer>false</organismsDiffer>
    <experiments>6</experiments>
</comment>
<comment type="interaction">
    <interactant intactId="EBI-726510">
        <id>Q96BZ8</id>
    </interactant>
    <interactant intactId="EBI-11063830">
        <id>Q86X02</id>
        <label>CDR2L</label>
    </interactant>
    <organismsDiffer>false</organismsDiffer>
    <experiments>3</experiments>
</comment>
<comment type="interaction">
    <interactant intactId="EBI-726510">
        <id>Q96BZ8</id>
    </interactant>
    <interactant intactId="EBI-10181988">
        <id>Q8IYX8-2</id>
        <label>CEP57L1</label>
    </interactant>
    <organismsDiffer>false</organismsDiffer>
    <experiments>3</experiments>
</comment>
<comment type="interaction">
    <interactant intactId="EBI-726510">
        <id>Q96BZ8</id>
    </interactant>
    <interactant intactId="EBI-739624">
        <id>Q8NHQ1</id>
        <label>CEP70</label>
    </interactant>
    <organismsDiffer>false</organismsDiffer>
    <experiments>7</experiments>
</comment>
<comment type="interaction">
    <interactant intactId="EBI-726510">
        <id>Q96BZ8</id>
    </interactant>
    <interactant intactId="EBI-742054">
        <id>Q96D03</id>
        <label>DDIT4L</label>
    </interactant>
    <organismsDiffer>false</organismsDiffer>
    <experiments>3</experiments>
</comment>
<comment type="interaction">
    <interactant intactId="EBI-726510">
        <id>Q96BZ8</id>
    </interactant>
    <interactant intactId="EBI-1055572">
        <id>P17661</id>
        <label>DES</label>
    </interactant>
    <organismsDiffer>false</organismsDiffer>
    <experiments>3</experiments>
</comment>
<comment type="interaction">
    <interactant intactId="EBI-726510">
        <id>Q96BZ8</id>
    </interactant>
    <interactant intactId="EBI-11988027">
        <id>Q9NRI5-2</id>
        <label>DISC1</label>
    </interactant>
    <organismsDiffer>false</organismsDiffer>
    <experiments>3</experiments>
</comment>
<comment type="interaction">
    <interactant intactId="EBI-726510">
        <id>Q96BZ8</id>
    </interactant>
    <interactant intactId="EBI-852291">
        <id>O60447</id>
        <label>EVI5</label>
    </interactant>
    <organismsDiffer>false</organismsDiffer>
    <experiments>3</experiments>
</comment>
<comment type="interaction">
    <interactant intactId="EBI-726510">
        <id>Q96BZ8</id>
    </interactant>
    <interactant intactId="EBI-5661036">
        <id>A1L4K1</id>
        <label>FSD2</label>
    </interactant>
    <organismsDiffer>false</organismsDiffer>
    <experiments>6</experiments>
</comment>
<comment type="interaction">
    <interactant intactId="EBI-726510">
        <id>Q96BZ8</id>
    </interactant>
    <interactant intactId="EBI-744302">
        <id>P14136</id>
        <label>GFAP</label>
    </interactant>
    <organismsDiffer>false</organismsDiffer>
    <experiments>3</experiments>
</comment>
<comment type="interaction">
    <interactant intactId="EBI-726510">
        <id>Q96BZ8</id>
    </interactant>
    <interactant intactId="EBI-618309">
        <id>Q08379</id>
        <label>GOLGA2</label>
    </interactant>
    <organismsDiffer>false</organismsDiffer>
    <experiments>8</experiments>
</comment>
<comment type="interaction">
    <interactant intactId="EBI-726510">
        <id>Q96BZ8</id>
    </interactant>
    <interactant intactId="EBI-5916454">
        <id>A6NEM1</id>
        <label>GOLGA6L9</label>
    </interactant>
    <organismsDiffer>false</organismsDiffer>
    <experiments>3</experiments>
</comment>
<comment type="interaction">
    <interactant intactId="EBI-726510">
        <id>Q96BZ8</id>
    </interactant>
    <interactant intactId="EBI-10961706">
        <id>Q96ED9-2</id>
        <label>HOOK2</label>
    </interactant>
    <organismsDiffer>false</organismsDiffer>
    <experiments>3</experiments>
</comment>
<comment type="interaction">
    <interactant intactId="EBI-726510">
        <id>Q96BZ8</id>
    </interactant>
    <interactant intactId="EBI-747204">
        <id>Q9UKT9</id>
        <label>IKZF3</label>
    </interactant>
    <organismsDiffer>false</organismsDiffer>
    <experiments>3</experiments>
</comment>
<comment type="interaction">
    <interactant intactId="EBI-726510">
        <id>Q96BZ8</id>
    </interactant>
    <interactant intactId="EBI-18398632">
        <id>Q9ULR0-1</id>
        <label>ISY1</label>
    </interactant>
    <organismsDiffer>false</organismsDiffer>
    <experiments>3</experiments>
</comment>
<comment type="interaction">
    <interactant intactId="EBI-726510">
        <id>Q96BZ8</id>
    </interactant>
    <interactant intactId="EBI-2556193">
        <id>Q63ZY3</id>
        <label>KANK2</label>
    </interactant>
    <organismsDiffer>false</organismsDiffer>
    <experiments>3</experiments>
</comment>
<comment type="interaction">
    <interactant intactId="EBI-726510">
        <id>Q96BZ8</id>
    </interactant>
    <interactant intactId="EBI-749265">
        <id>Q8N6L0</id>
        <label>KASH5</label>
    </interactant>
    <organismsDiffer>false</organismsDiffer>
    <experiments>3</experiments>
</comment>
<comment type="interaction">
    <interactant intactId="EBI-726510">
        <id>Q96BZ8</id>
    </interactant>
    <interactant intactId="EBI-2125614">
        <id>Q9BVG8</id>
        <label>KIFC3</label>
    </interactant>
    <organismsDiffer>false</organismsDiffer>
    <experiments>3</experiments>
</comment>
<comment type="interaction">
    <interactant intactId="EBI-726510">
        <id>Q96BZ8</id>
    </interactant>
    <interactant intactId="EBI-14069005">
        <id>Q9BVG8-5</id>
        <label>KIFC3</label>
    </interactant>
    <organismsDiffer>false</organismsDiffer>
    <experiments>3</experiments>
</comment>
<comment type="interaction">
    <interactant intactId="EBI-726510">
        <id>Q96BZ8</id>
    </interactant>
    <interactant intactId="EBI-742756">
        <id>P08727</id>
        <label>KRT19</label>
    </interactant>
    <organismsDiffer>false</organismsDiffer>
    <experiments>3</experiments>
</comment>
<comment type="interaction">
    <interactant intactId="EBI-726510">
        <id>Q96BZ8</id>
    </interactant>
    <interactant intactId="EBI-948001">
        <id>Q15323</id>
        <label>KRT31</label>
    </interactant>
    <organismsDiffer>false</organismsDiffer>
    <experiments>6</experiments>
</comment>
<comment type="interaction">
    <interactant intactId="EBI-726510">
        <id>Q96BZ8</id>
    </interactant>
    <interactant intactId="EBI-1058674">
        <id>Q92764</id>
        <label>KRT35</label>
    </interactant>
    <organismsDiffer>false</organismsDiffer>
    <experiments>3</experiments>
</comment>
<comment type="interaction">
    <interactant intactId="EBI-726510">
        <id>Q96BZ8</id>
    </interactant>
    <interactant intactId="EBI-10171697">
        <id>Q6A162</id>
        <label>KRT40</label>
    </interactant>
    <organismsDiffer>false</organismsDiffer>
    <experiments>6</experiments>
</comment>
<comment type="interaction">
    <interactant intactId="EBI-726510">
        <id>Q96BZ8</id>
    </interactant>
    <interactant intactId="EBI-10171774">
        <id>P60410</id>
        <label>KRTAP10-8</label>
    </interactant>
    <organismsDiffer>false</organismsDiffer>
    <experiments>3</experiments>
</comment>
<comment type="interaction">
    <interactant intactId="EBI-726510">
        <id>Q96BZ8</id>
    </interactant>
    <interactant intactId="EBI-740738">
        <id>O95751</id>
        <label>LDOC1</label>
    </interactant>
    <organismsDiffer>false</organismsDiffer>
    <experiments>8</experiments>
</comment>
<comment type="interaction">
    <interactant intactId="EBI-726510">
        <id>Q96BZ8</id>
    </interactant>
    <interactant intactId="EBI-18273118">
        <id>Q9P2M1</id>
        <label>LRP2BP</label>
    </interactant>
    <organismsDiffer>false</organismsDiffer>
    <experiments>3</experiments>
</comment>
<comment type="interaction">
    <interactant intactId="EBI-726510">
        <id>Q96BZ8</id>
    </interactant>
    <interactant intactId="EBI-1216080">
        <id>Q9Y250</id>
        <label>LZTS1</label>
    </interactant>
    <organismsDiffer>false</organismsDiffer>
    <experiments>3</experiments>
</comment>
<comment type="interaction">
    <interactant intactId="EBI-726510">
        <id>Q96BZ8</id>
    </interactant>
    <interactant intactId="EBI-10268010">
        <id>Q8N8X9</id>
        <label>MAB21L3</label>
    </interactant>
    <organismsDiffer>false</organismsDiffer>
    <experiments>3</experiments>
</comment>
<comment type="interaction">
    <interactant intactId="EBI-726510">
        <id>Q96BZ8</id>
    </interactant>
    <interactant intactId="EBI-742610">
        <id>Q9Y6D9</id>
        <label>MAD1L1</label>
    </interactant>
    <organismsDiffer>false</organismsDiffer>
    <experiments>3</experiments>
</comment>
<comment type="interaction">
    <interactant intactId="EBI-726510">
        <id>Q96BZ8</id>
    </interactant>
    <interactant intactId="EBI-18582591">
        <id>Q99687-3</id>
        <label>MEIS3</label>
    </interactant>
    <organismsDiffer>false</organismsDiffer>
    <experiments>3</experiments>
</comment>
<comment type="interaction">
    <interactant intactId="EBI-726510">
        <id>Q96BZ8</id>
    </interactant>
    <interactant intactId="EBI-10172526">
        <id>Q9UJV3-2</id>
        <label>MID2</label>
    </interactant>
    <organismsDiffer>false</organismsDiffer>
    <experiments>6</experiments>
</comment>
<comment type="interaction">
    <interactant intactId="EBI-726510">
        <id>Q96BZ8</id>
    </interactant>
    <interactant intactId="EBI-2548751">
        <id>Q8TD10</id>
        <label>MIPOL1</label>
    </interactant>
    <organismsDiffer>false</organismsDiffer>
    <experiments>3</experiments>
</comment>
<comment type="interaction">
    <interactant intactId="EBI-726510">
        <id>Q96BZ8</id>
    </interactant>
    <interactant intactId="EBI-723426">
        <id>Q13084</id>
        <label>MRPL28</label>
    </interactant>
    <organismsDiffer>false</organismsDiffer>
    <experiments>3</experiments>
</comment>
<comment type="interaction">
    <interactant intactId="EBI-726510">
        <id>Q96BZ8</id>
    </interactant>
    <interactant intactId="EBI-742948">
        <id>Q5JR59</id>
        <label>MTUS2</label>
    </interactant>
    <organismsDiffer>false</organismsDiffer>
    <experiments>3</experiments>
</comment>
<comment type="interaction">
    <interactant intactId="EBI-726510">
        <id>Q96BZ8</id>
    </interactant>
    <interactant intactId="EBI-11522433">
        <id>Q5JR59-3</id>
        <label>MTUS2</label>
    </interactant>
    <organismsDiffer>false</organismsDiffer>
    <experiments>3</experiments>
</comment>
<comment type="interaction">
    <interactant intactId="EBI-726510">
        <id>Q96BZ8</id>
    </interactant>
    <interactant intactId="EBI-8641936">
        <id>Q15742</id>
        <label>NAB2</label>
    </interactant>
    <organismsDiffer>false</organismsDiffer>
    <experiments>6</experiments>
</comment>
<comment type="interaction">
    <interactant intactId="EBI-726510">
        <id>Q96BZ8</id>
    </interactant>
    <interactant intactId="EBI-10172876">
        <id>Q7Z6G3-2</id>
        <label>NECAB2</label>
    </interactant>
    <organismsDiffer>false</organismsDiffer>
    <experiments>3</experiments>
</comment>
<comment type="interaction">
    <interactant intactId="EBI-726510">
        <id>Q96BZ8</id>
    </interactant>
    <interactant intactId="EBI-741158">
        <id>Q96HA8</id>
        <label>NTAQ1</label>
    </interactant>
    <organismsDiffer>false</organismsDiffer>
    <experiments>3</experiments>
</comment>
<comment type="interaction">
    <interactant intactId="EBI-726510">
        <id>Q96BZ8</id>
    </interactant>
    <interactant intactId="EBI-591778">
        <id>P61970</id>
        <label>NUTF2</label>
    </interactant>
    <organismsDiffer>false</organismsDiffer>
    <experiments>3</experiments>
</comment>
<comment type="interaction">
    <interactant intactId="EBI-726510">
        <id>Q96BZ8</id>
    </interactant>
    <interactant intactId="EBI-536879">
        <id>O43482</id>
        <label>OIP5</label>
    </interactant>
    <organismsDiffer>false</organismsDiffer>
    <experiments>3</experiments>
</comment>
<comment type="interaction">
    <interactant intactId="EBI-726510">
        <id>Q96BZ8</id>
    </interactant>
    <interactant intactId="EBI-741896">
        <id>Q9P286</id>
        <label>PAK5</label>
    </interactant>
    <organismsDiffer>false</organismsDiffer>
    <experiments>3</experiments>
</comment>
<comment type="interaction">
    <interactant intactId="EBI-726510">
        <id>Q96BZ8</id>
    </interactant>
    <interactant intactId="EBI-1105124">
        <id>Q5VU43</id>
        <label>PDE4DIP</label>
    </interactant>
    <organismsDiffer>false</organismsDiffer>
    <experiments>3</experiments>
</comment>
<comment type="interaction">
    <interactant intactId="EBI-726510">
        <id>Q96BZ8</id>
    </interactant>
    <interactant intactId="EBI-2805516">
        <id>P31321</id>
        <label>PRKAR1B</label>
    </interactant>
    <organismsDiffer>false</organismsDiffer>
    <experiments>3</experiments>
</comment>
<comment type="interaction">
    <interactant intactId="EBI-726510">
        <id>Q96BZ8</id>
    </interactant>
    <interactant intactId="EBI-752074">
        <id>P41219</id>
        <label>PRPH</label>
    </interactant>
    <organismsDiffer>false</organismsDiffer>
    <experiments>3</experiments>
</comment>
<comment type="interaction">
    <interactant intactId="EBI-726510">
        <id>Q96BZ8</id>
    </interactant>
    <interactant intactId="EBI-372273">
        <id>P20618</id>
        <label>PSMB1</label>
    </interactant>
    <organismsDiffer>false</organismsDiffer>
    <experiments>3</experiments>
</comment>
<comment type="interaction">
    <interactant intactId="EBI-726510">
        <id>Q96BZ8</id>
    </interactant>
    <interactant intactId="EBI-447043">
        <id>Q15276</id>
        <label>RABEP1</label>
    </interactant>
    <organismsDiffer>false</organismsDiffer>
    <experiments>3</experiments>
</comment>
<comment type="interaction">
    <interactant intactId="EBI-726510">
        <id>Q96BZ8</id>
    </interactant>
    <interactant intactId="EBI-10829018">
        <id>Q04864-2</id>
        <label>REL</label>
    </interactant>
    <organismsDiffer>false</organismsDiffer>
    <experiments>4</experiments>
</comment>
<comment type="interaction">
    <interactant intactId="EBI-726510">
        <id>Q96BZ8</id>
    </interactant>
    <interactant intactId="EBI-1378139">
        <id>Q9HAT0</id>
        <label>ROPN1</label>
    </interactant>
    <organismsDiffer>false</organismsDiffer>
    <experiments>8</experiments>
</comment>
<comment type="interaction">
    <interactant intactId="EBI-726510">
        <id>Q96BZ8</id>
    </interactant>
    <interactant intactId="EBI-12023020">
        <id>Q96KG9-4</id>
        <label>SCYL1</label>
    </interactant>
    <organismsDiffer>false</organismsDiffer>
    <experiments>3</experiments>
</comment>
<comment type="interaction">
    <interactant intactId="EBI-726510">
        <id>Q96BZ8</id>
    </interactant>
    <interactant intactId="EBI-744066">
        <id>Q9UM82</id>
        <label>SPATA2</label>
    </interactant>
    <organismsDiffer>false</organismsDiffer>
    <experiments>3</experiments>
</comment>
<comment type="interaction">
    <interactant intactId="EBI-726510">
        <id>Q96BZ8</id>
    </interactant>
    <interactant intactId="EBI-714135">
        <id>O75558</id>
        <label>STX11</label>
    </interactant>
    <organismsDiffer>false</organismsDiffer>
    <experiments>3</experiments>
</comment>
<comment type="interaction">
    <interactant intactId="EBI-726510">
        <id>Q96BZ8</id>
    </interactant>
    <interactant intactId="EBI-533224">
        <id>P15884</id>
        <label>TCF4</label>
    </interactant>
    <organismsDiffer>false</organismsDiffer>
    <experiments>3</experiments>
</comment>
<comment type="interaction">
    <interactant intactId="EBI-726510">
        <id>Q96BZ8</id>
    </interactant>
    <interactant intactId="EBI-11139477">
        <id>Q96N21</id>
        <label>TEPSIN</label>
    </interactant>
    <organismsDiffer>false</organismsDiffer>
    <experiments>3</experiments>
</comment>
<comment type="interaction">
    <interactant intactId="EBI-726510">
        <id>Q96BZ8</id>
    </interactant>
    <interactant intactId="EBI-12090309">
        <id>Q9BXU0</id>
        <label>TEX12</label>
    </interactant>
    <organismsDiffer>false</organismsDiffer>
    <experiments>3</experiments>
</comment>
<comment type="interaction">
    <interactant intactId="EBI-726510">
        <id>Q96BZ8</id>
    </interactant>
    <interactant intactId="EBI-1105213">
        <id>Q9UBB9</id>
        <label>TFIP11</label>
    </interactant>
    <organismsDiffer>false</organismsDiffer>
    <experiments>3</experiments>
</comment>
<comment type="interaction">
    <interactant intactId="EBI-726510">
        <id>Q96BZ8</id>
    </interactant>
    <interactant intactId="EBI-9675724">
        <id>Q8WW34</id>
        <label>TMEM239</label>
    </interactant>
    <organismsDiffer>false</organismsDiffer>
    <experiments>3</experiments>
</comment>
<comment type="interaction">
    <interactant intactId="EBI-726510">
        <id>Q96BZ8</id>
    </interactant>
    <interactant intactId="EBI-355744">
        <id>Q12933</id>
        <label>TRAF2</label>
    </interactant>
    <organismsDiffer>false</organismsDiffer>
    <experiments>3</experiments>
</comment>
<comment type="interaction">
    <interactant intactId="EBI-726510">
        <id>Q96BZ8</id>
    </interactant>
    <interactant intactId="EBI-492476">
        <id>Q96RU7</id>
        <label>TRIB3</label>
    </interactant>
    <organismsDiffer>false</organismsDiffer>
    <experiments>3</experiments>
</comment>
<comment type="interaction">
    <interactant intactId="EBI-726510">
        <id>Q96BZ8</id>
    </interactant>
    <interactant intactId="EBI-740098">
        <id>P36406</id>
        <label>TRIM23</label>
    </interactant>
    <organismsDiffer>false</organismsDiffer>
    <experiments>3</experiments>
</comment>
<comment type="interaction">
    <interactant intactId="EBI-726510">
        <id>Q96BZ8</id>
    </interactant>
    <interactant intactId="EBI-719493">
        <id>P14373</id>
        <label>TRIM27</label>
    </interactant>
    <organismsDiffer>false</organismsDiffer>
    <experiments>3</experiments>
</comment>
<comment type="interaction">
    <interactant intactId="EBI-726510">
        <id>Q96BZ8</id>
    </interactant>
    <interactant intactId="EBI-2130429">
        <id>Q9BYV2</id>
        <label>TRIM54</label>
    </interactant>
    <organismsDiffer>false</organismsDiffer>
    <experiments>6</experiments>
</comment>
<comment type="interaction">
    <interactant intactId="EBI-726510">
        <id>Q96BZ8</id>
    </interactant>
    <interactant intactId="EBI-12806590">
        <id>Q86WV8</id>
        <label>TSC1</label>
    </interactant>
    <organismsDiffer>false</organismsDiffer>
    <experiments>3</experiments>
</comment>
<comment type="interaction">
    <interactant intactId="EBI-726510">
        <id>Q96BZ8</id>
    </interactant>
    <interactant intactId="EBI-607755">
        <id>Q9BZL1</id>
        <label>UBL5</label>
    </interactant>
    <organismsDiffer>false</organismsDiffer>
    <experiments>3</experiments>
</comment>
<comment type="interaction">
    <interactant intactId="EBI-726510">
        <id>Q96BZ8</id>
    </interactant>
    <interactant intactId="EBI-11524408">
        <id>Q5T124-6</id>
        <label>UBXN11</label>
    </interactant>
    <organismsDiffer>false</organismsDiffer>
    <experiments>3</experiments>
</comment>
<comment type="interaction">
    <interactant intactId="EBI-726510">
        <id>Q96BZ8</id>
    </interactant>
    <interactant intactId="EBI-739895">
        <id>Q8N6Y0</id>
        <label>USHBP1</label>
    </interactant>
    <organismsDiffer>false</organismsDiffer>
    <experiments>3</experiments>
</comment>
<comment type="interaction">
    <interactant intactId="EBI-726510">
        <id>Q96BZ8</id>
    </interactant>
    <interactant intactId="EBI-12030590">
        <id>Q9H0C1</id>
        <label>ZMYND12</label>
    </interactant>
    <organismsDiffer>false</organismsDiffer>
    <experiments>3</experiments>
</comment>
<comment type="interaction">
    <interactant intactId="EBI-726510">
        <id>Q96BZ8</id>
    </interactant>
    <interactant intactId="EBI-527853">
        <id>Q9UGI0</id>
        <label>ZRANB1</label>
    </interactant>
    <organismsDiffer>false</organismsDiffer>
    <experiments>3</experiments>
</comment>
<comment type="miscellaneous">
    <text>Belongs to the leukocyte receptor cluster (LRC) present on 19q13.4.</text>
</comment>
<comment type="sequence caution" evidence="3">
    <conflict type="erroneous initiation">
        <sequence resource="EMBL-CDS" id="AAG01393"/>
    </conflict>
    <text>Extended N-terminus.</text>
</comment>
<protein>
    <recommendedName>
        <fullName>Leukocyte receptor cluster member 1</fullName>
    </recommendedName>
</protein>
<dbReference type="EMBL" id="AC245052">
    <property type="status" value="NOT_ANNOTATED_CDS"/>
    <property type="molecule type" value="Genomic_DNA"/>
</dbReference>
<dbReference type="EMBL" id="BC014986">
    <property type="protein sequence ID" value="AAH14986.1"/>
    <property type="molecule type" value="mRNA"/>
</dbReference>
<dbReference type="EMBL" id="AF211966">
    <property type="protein sequence ID" value="AAG01393.1"/>
    <property type="status" value="ALT_INIT"/>
    <property type="molecule type" value="mRNA"/>
</dbReference>
<dbReference type="CCDS" id="CCDS12881.1"/>
<dbReference type="RefSeq" id="NP_077292.2">
    <property type="nucleotide sequence ID" value="NM_024316.3"/>
</dbReference>
<dbReference type="SMR" id="Q96BZ8"/>
<dbReference type="BioGRID" id="122582">
    <property type="interactions" value="126"/>
</dbReference>
<dbReference type="FunCoup" id="Q96BZ8">
    <property type="interactions" value="395"/>
</dbReference>
<dbReference type="IntAct" id="Q96BZ8">
    <property type="interactions" value="105"/>
</dbReference>
<dbReference type="MINT" id="Q96BZ8"/>
<dbReference type="STRING" id="9606.ENSP00000222224"/>
<dbReference type="GlyGen" id="Q96BZ8">
    <property type="glycosylation" value="1 site, 1 O-linked glycan (1 site)"/>
</dbReference>
<dbReference type="iPTMnet" id="Q96BZ8"/>
<dbReference type="PhosphoSitePlus" id="Q96BZ8"/>
<dbReference type="BioMuta" id="LENG1"/>
<dbReference type="DMDM" id="74731296"/>
<dbReference type="jPOST" id="Q96BZ8"/>
<dbReference type="MassIVE" id="Q96BZ8"/>
<dbReference type="PaxDb" id="9606-ENSP00000222224"/>
<dbReference type="PeptideAtlas" id="Q96BZ8"/>
<dbReference type="ProteomicsDB" id="76133"/>
<dbReference type="Pumba" id="Q96BZ8"/>
<dbReference type="Antibodypedia" id="46337">
    <property type="antibodies" value="233 antibodies from 17 providers"/>
</dbReference>
<dbReference type="DNASU" id="79165"/>
<dbReference type="Ensembl" id="ENST00000222224.4">
    <property type="protein sequence ID" value="ENSP00000222224.3"/>
    <property type="gene ID" value="ENSG00000105617.4"/>
</dbReference>
<dbReference type="Ensembl" id="ENST00000610998.1">
    <property type="protein sequence ID" value="ENSP00000481386.1"/>
    <property type="gene ID" value="ENSG00000276959.1"/>
</dbReference>
<dbReference type="Ensembl" id="ENST00000613622.1">
    <property type="protein sequence ID" value="ENSP00000478485.1"/>
    <property type="gene ID" value="ENSG00000278516.1"/>
</dbReference>
<dbReference type="Ensembl" id="ENST00000614037.1">
    <property type="protein sequence ID" value="ENSP00000483164.1"/>
    <property type="gene ID" value="ENSG00000276774.1"/>
</dbReference>
<dbReference type="Ensembl" id="ENST00000616103.1">
    <property type="protein sequence ID" value="ENSP00000481252.1"/>
    <property type="gene ID" value="ENSG00000277808.1"/>
</dbReference>
<dbReference type="Ensembl" id="ENST00000616816.1">
    <property type="protein sequence ID" value="ENSP00000480516.1"/>
    <property type="gene ID" value="ENSG00000277457.1"/>
</dbReference>
<dbReference type="Ensembl" id="ENST00000617592.1">
    <property type="protein sequence ID" value="ENSP00000481079.1"/>
    <property type="gene ID" value="ENSG00000278426.1"/>
</dbReference>
<dbReference type="Ensembl" id="ENST00000619669.1">
    <property type="protein sequence ID" value="ENSP00000477607.1"/>
    <property type="gene ID" value="ENSG00000276628.1"/>
</dbReference>
<dbReference type="Ensembl" id="ENST00000621285.1">
    <property type="protein sequence ID" value="ENSP00000479538.1"/>
    <property type="gene ID" value="ENSG00000278257.1"/>
</dbReference>
<dbReference type="Ensembl" id="ENST00000621927.1">
    <property type="protein sequence ID" value="ENSP00000481948.1"/>
    <property type="gene ID" value="ENSG00000275935.1"/>
</dbReference>
<dbReference type="GeneID" id="79165"/>
<dbReference type="KEGG" id="hsa:79165"/>
<dbReference type="MANE-Select" id="ENST00000222224.4">
    <property type="protein sequence ID" value="ENSP00000222224.3"/>
    <property type="RefSeq nucleotide sequence ID" value="NM_024316.3"/>
    <property type="RefSeq protein sequence ID" value="NP_077292.2"/>
</dbReference>
<dbReference type="UCSC" id="uc002qdm.4">
    <property type="organism name" value="human"/>
</dbReference>
<dbReference type="AGR" id="HGNC:15502"/>
<dbReference type="CTD" id="79165"/>
<dbReference type="DisGeNET" id="79165"/>
<dbReference type="GeneCards" id="LENG1"/>
<dbReference type="HGNC" id="HGNC:15502">
    <property type="gene designation" value="LENG1"/>
</dbReference>
<dbReference type="HPA" id="ENSG00000105617">
    <property type="expression patterns" value="Low tissue specificity"/>
</dbReference>
<dbReference type="neXtProt" id="NX_Q96BZ8"/>
<dbReference type="OpenTargets" id="ENSG00000105617"/>
<dbReference type="PharmGKB" id="PA134904804"/>
<dbReference type="VEuPathDB" id="HostDB:ENSG00000105617"/>
<dbReference type="eggNOG" id="ENOG502RZ97">
    <property type="taxonomic scope" value="Eukaryota"/>
</dbReference>
<dbReference type="GeneTree" id="ENSGT00510000048131"/>
<dbReference type="HOGENOM" id="CLU_058751_2_0_1"/>
<dbReference type="InParanoid" id="Q96BZ8"/>
<dbReference type="OMA" id="WYEELPK"/>
<dbReference type="OrthoDB" id="2159131at2759"/>
<dbReference type="PAN-GO" id="Q96BZ8">
    <property type="GO annotations" value="0 GO annotations based on evolutionary models"/>
</dbReference>
<dbReference type="PhylomeDB" id="Q96BZ8"/>
<dbReference type="TreeFam" id="TF317830"/>
<dbReference type="PathwayCommons" id="Q96BZ8"/>
<dbReference type="Reactome" id="R-HSA-72163">
    <property type="pathway name" value="mRNA Splicing - Major Pathway"/>
</dbReference>
<dbReference type="SignaLink" id="Q96BZ8"/>
<dbReference type="BioGRID-ORCS" id="79165">
    <property type="hits" value="201 hits in 1153 CRISPR screens"/>
</dbReference>
<dbReference type="ChiTaRS" id="LENG1">
    <property type="organism name" value="human"/>
</dbReference>
<dbReference type="GenomeRNAi" id="79165"/>
<dbReference type="Pharos" id="Q96BZ8">
    <property type="development level" value="Tdark"/>
</dbReference>
<dbReference type="PRO" id="PR:Q96BZ8"/>
<dbReference type="Proteomes" id="UP000005640">
    <property type="component" value="Chromosome 19"/>
</dbReference>
<dbReference type="RNAct" id="Q96BZ8">
    <property type="molecule type" value="protein"/>
</dbReference>
<dbReference type="Bgee" id="ENSG00000105617">
    <property type="expression patterns" value="Expressed in sural nerve and 99 other cell types or tissues"/>
</dbReference>
<dbReference type="GO" id="GO:0005654">
    <property type="term" value="C:nucleoplasm"/>
    <property type="evidence" value="ECO:0000304"/>
    <property type="project" value="Reactome"/>
</dbReference>
<dbReference type="InterPro" id="IPR019339">
    <property type="entry name" value="CIR_N_dom"/>
</dbReference>
<dbReference type="InterPro" id="IPR039875">
    <property type="entry name" value="LENG1-like"/>
</dbReference>
<dbReference type="PANTHER" id="PTHR22093">
    <property type="entry name" value="LEUKOCYTE RECEPTOR CLUSTER LRC MEMBER 1"/>
    <property type="match status" value="1"/>
</dbReference>
<dbReference type="PANTHER" id="PTHR22093:SF0">
    <property type="entry name" value="LEUKOCYTE RECEPTOR CLUSTER MEMBER 1"/>
    <property type="match status" value="1"/>
</dbReference>
<dbReference type="Pfam" id="PF10197">
    <property type="entry name" value="Cir_N"/>
    <property type="match status" value="1"/>
</dbReference>
<dbReference type="SMART" id="SM01083">
    <property type="entry name" value="Cir_N"/>
    <property type="match status" value="1"/>
</dbReference>
<organism>
    <name type="scientific">Homo sapiens</name>
    <name type="common">Human</name>
    <dbReference type="NCBI Taxonomy" id="9606"/>
    <lineage>
        <taxon>Eukaryota</taxon>
        <taxon>Metazoa</taxon>
        <taxon>Chordata</taxon>
        <taxon>Craniata</taxon>
        <taxon>Vertebrata</taxon>
        <taxon>Euteleostomi</taxon>
        <taxon>Mammalia</taxon>
        <taxon>Eutheria</taxon>
        <taxon>Euarchontoglires</taxon>
        <taxon>Primates</taxon>
        <taxon>Haplorrhini</taxon>
        <taxon>Catarrhini</taxon>
        <taxon>Hominidae</taxon>
        <taxon>Homo</taxon>
    </lineage>
</organism>
<sequence length="264" mass="30528">MNILPKKSWHVRNKDNVARVRRDEAQAREEEKERERRVLLAQQEARTEFLRKKARHQNSLPELEAAEAGAPGSGPVDLFRELLEEGKGVIRGNKEYKEEKRQEKERQEKALGILTYLGQSAAEAQTQPPWYQLPPGRGGPPPGPAPDEKIKSRLDPLREMQKHLGKKRQHGGDEGSRSRKEKEGSEKQRPKEPPSLDQLRAERLRREAAERSRAEALLARVQGRALQEGQPEEDETDDRRRRYNSQFNPQLARRPRQQDPHLTH</sequence>
<gene>
    <name type="primary">LENG1</name>
</gene>
<reference key="1">
    <citation type="journal article" date="2004" name="Nature">
        <title>The DNA sequence and biology of human chromosome 19.</title>
        <authorList>
            <person name="Grimwood J."/>
            <person name="Gordon L.A."/>
            <person name="Olsen A.S."/>
            <person name="Terry A."/>
            <person name="Schmutz J."/>
            <person name="Lamerdin J.E."/>
            <person name="Hellsten U."/>
            <person name="Goodstein D."/>
            <person name="Couronne O."/>
            <person name="Tran-Gyamfi M."/>
            <person name="Aerts A."/>
            <person name="Altherr M."/>
            <person name="Ashworth L."/>
            <person name="Bajorek E."/>
            <person name="Black S."/>
            <person name="Branscomb E."/>
            <person name="Caenepeel S."/>
            <person name="Carrano A.V."/>
            <person name="Caoile C."/>
            <person name="Chan Y.M."/>
            <person name="Christensen M."/>
            <person name="Cleland C.A."/>
            <person name="Copeland A."/>
            <person name="Dalin E."/>
            <person name="Dehal P."/>
            <person name="Denys M."/>
            <person name="Detter J.C."/>
            <person name="Escobar J."/>
            <person name="Flowers D."/>
            <person name="Fotopulos D."/>
            <person name="Garcia C."/>
            <person name="Georgescu A.M."/>
            <person name="Glavina T."/>
            <person name="Gomez M."/>
            <person name="Gonzales E."/>
            <person name="Groza M."/>
            <person name="Hammon N."/>
            <person name="Hawkins T."/>
            <person name="Haydu L."/>
            <person name="Ho I."/>
            <person name="Huang W."/>
            <person name="Israni S."/>
            <person name="Jett J."/>
            <person name="Kadner K."/>
            <person name="Kimball H."/>
            <person name="Kobayashi A."/>
            <person name="Larionov V."/>
            <person name="Leem S.-H."/>
            <person name="Lopez F."/>
            <person name="Lou Y."/>
            <person name="Lowry S."/>
            <person name="Malfatti S."/>
            <person name="Martinez D."/>
            <person name="McCready P.M."/>
            <person name="Medina C."/>
            <person name="Morgan J."/>
            <person name="Nelson K."/>
            <person name="Nolan M."/>
            <person name="Ovcharenko I."/>
            <person name="Pitluck S."/>
            <person name="Pollard M."/>
            <person name="Popkie A.P."/>
            <person name="Predki P."/>
            <person name="Quan G."/>
            <person name="Ramirez L."/>
            <person name="Rash S."/>
            <person name="Retterer J."/>
            <person name="Rodriguez A."/>
            <person name="Rogers S."/>
            <person name="Salamov A."/>
            <person name="Salazar A."/>
            <person name="She X."/>
            <person name="Smith D."/>
            <person name="Slezak T."/>
            <person name="Solovyev V."/>
            <person name="Thayer N."/>
            <person name="Tice H."/>
            <person name="Tsai M."/>
            <person name="Ustaszewska A."/>
            <person name="Vo N."/>
            <person name="Wagner M."/>
            <person name="Wheeler J."/>
            <person name="Wu K."/>
            <person name="Xie G."/>
            <person name="Yang J."/>
            <person name="Dubchak I."/>
            <person name="Furey T.S."/>
            <person name="DeJong P."/>
            <person name="Dickson M."/>
            <person name="Gordon D."/>
            <person name="Eichler E.E."/>
            <person name="Pennacchio L.A."/>
            <person name="Richardson P."/>
            <person name="Stubbs L."/>
            <person name="Rokhsar D.S."/>
            <person name="Myers R.M."/>
            <person name="Rubin E.M."/>
            <person name="Lucas S.M."/>
        </authorList>
    </citation>
    <scope>NUCLEOTIDE SEQUENCE [LARGE SCALE GENOMIC DNA]</scope>
</reference>
<reference key="2">
    <citation type="journal article" date="2004" name="Genome Res.">
        <title>The status, quality, and expansion of the NIH full-length cDNA project: the Mammalian Gene Collection (MGC).</title>
        <authorList>
            <consortium name="The MGC Project Team"/>
        </authorList>
    </citation>
    <scope>NUCLEOTIDE SEQUENCE [LARGE SCALE MRNA]</scope>
    <source>
        <tissue>Skin</tissue>
    </source>
</reference>
<reference key="3">
    <citation type="journal article" date="2000" name="Immunogenetics">
        <title>Extensive gene duplications and a large inversion characterize the human leukocyte receptor cluster.</title>
        <authorList>
            <person name="Wende H."/>
            <person name="Volz A."/>
            <person name="Ziegler A."/>
        </authorList>
    </citation>
    <scope>NUCLEOTIDE SEQUENCE [MRNA] OF 63-264</scope>
    <scope>IDENTIFICATION IN THE LRC</scope>
    <source>
        <tissue>Thymus</tissue>
    </source>
</reference>
<reference key="4">
    <citation type="journal article" date="2001" name="Immunogenetics">
        <authorList>
            <person name="Wende H."/>
            <person name="Volz A."/>
            <person name="Ziegler A."/>
        </authorList>
    </citation>
    <scope>ERRATUM OF PUBMED:10941842</scope>
</reference>
<reference key="5">
    <citation type="journal article" date="2007" name="Science">
        <title>ATM and ATR substrate analysis reveals extensive protein networks responsive to DNA damage.</title>
        <authorList>
            <person name="Matsuoka S."/>
            <person name="Ballif B.A."/>
            <person name="Smogorzewska A."/>
            <person name="McDonald E.R. III"/>
            <person name="Hurov K.E."/>
            <person name="Luo J."/>
            <person name="Bakalarski C.E."/>
            <person name="Zhao Z."/>
            <person name="Solimini N."/>
            <person name="Lerenthal Y."/>
            <person name="Shiloh Y."/>
            <person name="Gygi S.P."/>
            <person name="Elledge S.J."/>
        </authorList>
    </citation>
    <scope>PHOSPHORYLATION [LARGE SCALE ANALYSIS] AT SER-245</scope>
    <scope>IDENTIFICATION BY MASS SPECTROMETRY [LARGE SCALE ANALYSIS]</scope>
    <source>
        <tissue>Embryonic kidney</tissue>
    </source>
</reference>
<reference key="6">
    <citation type="journal article" date="2008" name="Proc. Natl. Acad. Sci. U.S.A.">
        <title>A quantitative atlas of mitotic phosphorylation.</title>
        <authorList>
            <person name="Dephoure N."/>
            <person name="Zhou C."/>
            <person name="Villen J."/>
            <person name="Beausoleil S.A."/>
            <person name="Bakalarski C.E."/>
            <person name="Elledge S.J."/>
            <person name="Gygi S.P."/>
        </authorList>
    </citation>
    <scope>PHOSPHORYLATION [LARGE SCALE ANALYSIS] AT SER-59</scope>
    <scope>IDENTIFICATION BY MASS SPECTROMETRY [LARGE SCALE ANALYSIS]</scope>
    <source>
        <tissue>Cervix carcinoma</tissue>
    </source>
</reference>
<reference key="7">
    <citation type="journal article" date="2009" name="Sci. Signal.">
        <title>Quantitative phosphoproteomic analysis of T cell receptor signaling reveals system-wide modulation of protein-protein interactions.</title>
        <authorList>
            <person name="Mayya V."/>
            <person name="Lundgren D.H."/>
            <person name="Hwang S.-I."/>
            <person name="Rezaul K."/>
            <person name="Wu L."/>
            <person name="Eng J.K."/>
            <person name="Rodionov V."/>
            <person name="Han D.K."/>
        </authorList>
    </citation>
    <scope>PHOSPHORYLATION [LARGE SCALE ANALYSIS] AT SER-59</scope>
    <scope>IDENTIFICATION BY MASS SPECTROMETRY [LARGE SCALE ANALYSIS]</scope>
    <source>
        <tissue>Leukemic T-cell</tissue>
    </source>
</reference>
<reference key="8">
    <citation type="journal article" date="2010" name="Sci. Signal.">
        <title>Quantitative phosphoproteomics reveals widespread full phosphorylation site occupancy during mitosis.</title>
        <authorList>
            <person name="Olsen J.V."/>
            <person name="Vermeulen M."/>
            <person name="Santamaria A."/>
            <person name="Kumar C."/>
            <person name="Miller M.L."/>
            <person name="Jensen L.J."/>
            <person name="Gnad F."/>
            <person name="Cox J."/>
            <person name="Jensen T.S."/>
            <person name="Nigg E.A."/>
            <person name="Brunak S."/>
            <person name="Mann M."/>
        </authorList>
    </citation>
    <scope>PHOSPHORYLATION [LARGE SCALE ANALYSIS] AT SER-59</scope>
    <scope>IDENTIFICATION BY MASS SPECTROMETRY [LARGE SCALE ANALYSIS]</scope>
    <source>
        <tissue>Cervix carcinoma</tissue>
    </source>
</reference>
<reference key="9">
    <citation type="journal article" date="2013" name="J. Proteome Res.">
        <title>Toward a comprehensive characterization of a human cancer cell phosphoproteome.</title>
        <authorList>
            <person name="Zhou H."/>
            <person name="Di Palma S."/>
            <person name="Preisinger C."/>
            <person name="Peng M."/>
            <person name="Polat A.N."/>
            <person name="Heck A.J."/>
            <person name="Mohammed S."/>
        </authorList>
    </citation>
    <scope>PHOSPHORYLATION [LARGE SCALE ANALYSIS] AT SER-59</scope>
    <scope>IDENTIFICATION BY MASS SPECTROMETRY [LARGE SCALE ANALYSIS]</scope>
    <source>
        <tissue>Erythroleukemia</tissue>
    </source>
</reference>
<evidence type="ECO:0000255" key="1"/>
<evidence type="ECO:0000256" key="2">
    <source>
        <dbReference type="SAM" id="MobiDB-lite"/>
    </source>
</evidence>
<evidence type="ECO:0000305" key="3"/>
<evidence type="ECO:0007744" key="4">
    <source>
    </source>
</evidence>
<evidence type="ECO:0007744" key="5">
    <source>
    </source>
</evidence>
<evidence type="ECO:0007744" key="6">
    <source>
    </source>
</evidence>
<evidence type="ECO:0007744" key="7">
    <source>
    </source>
</evidence>
<evidence type="ECO:0007744" key="8">
    <source>
    </source>
</evidence>
<proteinExistence type="evidence at protein level"/>
<keyword id="KW-0175">Coiled coil</keyword>
<keyword id="KW-0597">Phosphoprotein</keyword>
<keyword id="KW-1267">Proteomics identification</keyword>
<keyword id="KW-1185">Reference proteome</keyword>
<accession>Q96BZ8</accession>
<accession>Q9HCU7</accession>
<name>LENG1_HUMAN</name>